<evidence type="ECO:0000255" key="1">
    <source>
        <dbReference type="HAMAP-Rule" id="MF_00835"/>
    </source>
</evidence>
<reference key="1">
    <citation type="journal article" date="2006" name="Nat. Biotechnol.">
        <title>Genome sequence of the ubiquitous hydrocarbon-degrading marine bacterium Alcanivorax borkumensis.</title>
        <authorList>
            <person name="Schneiker S."/>
            <person name="Martins dos Santos V.A.P."/>
            <person name="Bartels D."/>
            <person name="Bekel T."/>
            <person name="Brecht M."/>
            <person name="Buhrmester J."/>
            <person name="Chernikova T.N."/>
            <person name="Denaro R."/>
            <person name="Ferrer M."/>
            <person name="Gertler C."/>
            <person name="Goesmann A."/>
            <person name="Golyshina O.V."/>
            <person name="Kaminski F."/>
            <person name="Khachane A.N."/>
            <person name="Lang S."/>
            <person name="Linke B."/>
            <person name="McHardy A.C."/>
            <person name="Meyer F."/>
            <person name="Nechitaylo T."/>
            <person name="Puehler A."/>
            <person name="Regenhardt D."/>
            <person name="Rupp O."/>
            <person name="Sabirova J.S."/>
            <person name="Selbitschka W."/>
            <person name="Yakimov M.M."/>
            <person name="Timmis K.N."/>
            <person name="Vorhoelter F.-J."/>
            <person name="Weidner S."/>
            <person name="Kaiser O."/>
            <person name="Golyshin P.N."/>
        </authorList>
    </citation>
    <scope>NUCLEOTIDE SEQUENCE [LARGE SCALE GENOMIC DNA]</scope>
    <source>
        <strain>ATCC 700651 / DSM 11573 / NCIMB 13689 / SK2</strain>
    </source>
</reference>
<proteinExistence type="inferred from homology"/>
<sequence>MYPSCRPRTPLPRPCMTFIATISWSAEAPVDTPVERSGKAVVSQHFGRAARSYDEHAVLQLAVGRSLVQRLPEALPINHALDLGCATAPFARAQQQALPDVQWQAVDLSSAMLAEAAERGRLDETYQPLCADAENLPLSTNSQGLVFSCFALQWCDPQVVMAEINRVLAPGGRLLLAVPLAGSLAELQSSWQRVNHRPHVNALPSLADWRSAAFQAGFADAQLQQQVMVEYYDSVKAIARRLKATGADHVSGASGLTGKNAWQAMVKEYEARRTQQGLPLTWNVLFLEAEKS</sequence>
<comment type="function">
    <text evidence="1">Converts the free carboxyl group of a malonyl-thioester to its methyl ester by transfer of a methyl group from S-adenosyl-L-methionine (SAM). It allows to synthesize pimeloyl-ACP via the fatty acid synthetic pathway.</text>
</comment>
<comment type="catalytic activity">
    <reaction evidence="1">
        <text>malonyl-[ACP] + S-adenosyl-L-methionine = malonyl-[ACP] methyl ester + S-adenosyl-L-homocysteine</text>
        <dbReference type="Rhea" id="RHEA:17105"/>
        <dbReference type="Rhea" id="RHEA-COMP:9623"/>
        <dbReference type="Rhea" id="RHEA-COMP:9954"/>
        <dbReference type="ChEBI" id="CHEBI:57856"/>
        <dbReference type="ChEBI" id="CHEBI:59789"/>
        <dbReference type="ChEBI" id="CHEBI:78449"/>
        <dbReference type="ChEBI" id="CHEBI:78845"/>
        <dbReference type="EC" id="2.1.1.197"/>
    </reaction>
</comment>
<comment type="pathway">
    <text evidence="1">Cofactor biosynthesis; biotin biosynthesis.</text>
</comment>
<comment type="similarity">
    <text evidence="1">Belongs to the methyltransferase superfamily.</text>
</comment>
<dbReference type="EC" id="2.1.1.197" evidence="1"/>
<dbReference type="EMBL" id="AM286690">
    <property type="protein sequence ID" value="CAL17665.1"/>
    <property type="molecule type" value="Genomic_DNA"/>
</dbReference>
<dbReference type="SMR" id="Q0VMD3"/>
<dbReference type="STRING" id="393595.ABO_2217"/>
<dbReference type="KEGG" id="abo:ABO_2217"/>
<dbReference type="eggNOG" id="COG2226">
    <property type="taxonomic scope" value="Bacteria"/>
</dbReference>
<dbReference type="HOGENOM" id="CLU_046586_2_3_6"/>
<dbReference type="OrthoDB" id="9760689at2"/>
<dbReference type="UniPathway" id="UPA00078"/>
<dbReference type="Proteomes" id="UP000008871">
    <property type="component" value="Chromosome"/>
</dbReference>
<dbReference type="GO" id="GO:0010340">
    <property type="term" value="F:carboxyl-O-methyltransferase activity"/>
    <property type="evidence" value="ECO:0007669"/>
    <property type="project" value="UniProtKB-UniRule"/>
</dbReference>
<dbReference type="GO" id="GO:0102130">
    <property type="term" value="F:malonyl-CoA methyltransferase activity"/>
    <property type="evidence" value="ECO:0007669"/>
    <property type="project" value="UniProtKB-EC"/>
</dbReference>
<dbReference type="GO" id="GO:0008757">
    <property type="term" value="F:S-adenosylmethionine-dependent methyltransferase activity"/>
    <property type="evidence" value="ECO:0007669"/>
    <property type="project" value="InterPro"/>
</dbReference>
<dbReference type="GO" id="GO:0009102">
    <property type="term" value="P:biotin biosynthetic process"/>
    <property type="evidence" value="ECO:0007669"/>
    <property type="project" value="UniProtKB-UniRule"/>
</dbReference>
<dbReference type="GO" id="GO:0032259">
    <property type="term" value="P:methylation"/>
    <property type="evidence" value="ECO:0007669"/>
    <property type="project" value="UniProtKB-KW"/>
</dbReference>
<dbReference type="CDD" id="cd02440">
    <property type="entry name" value="AdoMet_MTases"/>
    <property type="match status" value="1"/>
</dbReference>
<dbReference type="Gene3D" id="3.40.50.150">
    <property type="entry name" value="Vaccinia Virus protein VP39"/>
    <property type="match status" value="1"/>
</dbReference>
<dbReference type="HAMAP" id="MF_00835">
    <property type="entry name" value="BioC"/>
    <property type="match status" value="1"/>
</dbReference>
<dbReference type="InterPro" id="IPR011814">
    <property type="entry name" value="BioC"/>
</dbReference>
<dbReference type="InterPro" id="IPR050602">
    <property type="entry name" value="Malonyl-ACP_OMT"/>
</dbReference>
<dbReference type="InterPro" id="IPR013216">
    <property type="entry name" value="Methyltransf_11"/>
</dbReference>
<dbReference type="InterPro" id="IPR029063">
    <property type="entry name" value="SAM-dependent_MTases_sf"/>
</dbReference>
<dbReference type="NCBIfam" id="TIGR02072">
    <property type="entry name" value="BioC"/>
    <property type="match status" value="1"/>
</dbReference>
<dbReference type="PANTHER" id="PTHR13090">
    <property type="entry name" value="ARGININE-HYDROXYLASE NDUFAF5, MITOCHONDRIAL"/>
    <property type="match status" value="1"/>
</dbReference>
<dbReference type="PANTHER" id="PTHR13090:SF1">
    <property type="entry name" value="ARGININE-HYDROXYLASE NDUFAF5, MITOCHONDRIAL"/>
    <property type="match status" value="1"/>
</dbReference>
<dbReference type="Pfam" id="PF08241">
    <property type="entry name" value="Methyltransf_11"/>
    <property type="match status" value="1"/>
</dbReference>
<dbReference type="SUPFAM" id="SSF53335">
    <property type="entry name" value="S-adenosyl-L-methionine-dependent methyltransferases"/>
    <property type="match status" value="1"/>
</dbReference>
<accession>Q0VMD3</accession>
<gene>
    <name evidence="1" type="primary">bioC</name>
    <name type="ordered locus">ABO_2217</name>
</gene>
<keyword id="KW-0093">Biotin biosynthesis</keyword>
<keyword id="KW-0489">Methyltransferase</keyword>
<keyword id="KW-1185">Reference proteome</keyword>
<keyword id="KW-0949">S-adenosyl-L-methionine</keyword>
<keyword id="KW-0808">Transferase</keyword>
<organism>
    <name type="scientific">Alcanivorax borkumensis (strain ATCC 700651 / DSM 11573 / NCIMB 13689 / SK2)</name>
    <dbReference type="NCBI Taxonomy" id="393595"/>
    <lineage>
        <taxon>Bacteria</taxon>
        <taxon>Pseudomonadati</taxon>
        <taxon>Pseudomonadota</taxon>
        <taxon>Gammaproteobacteria</taxon>
        <taxon>Oceanospirillales</taxon>
        <taxon>Alcanivoracaceae</taxon>
        <taxon>Alcanivorax</taxon>
    </lineage>
</organism>
<name>BIOC_ALCBS</name>
<feature type="chain" id="PRO_0000412475" description="Malonyl-[acyl-carrier protein] O-methyltransferase">
    <location>
        <begin position="1"/>
        <end position="292"/>
    </location>
</feature>
<protein>
    <recommendedName>
        <fullName evidence="1">Malonyl-[acyl-carrier protein] O-methyltransferase</fullName>
        <shortName evidence="1">Malonyl-ACP O-methyltransferase</shortName>
        <ecNumber evidence="1">2.1.1.197</ecNumber>
    </recommendedName>
    <alternativeName>
        <fullName evidence="1">Biotin synthesis protein BioC</fullName>
    </alternativeName>
</protein>